<reference key="1">
    <citation type="journal article" date="2007" name="Microbiology">
        <title>Sulphite efflux pumps in Aspergillus fumigatus and dermatophytes.</title>
        <authorList>
            <person name="Lechenne B."/>
            <person name="Reichard U."/>
            <person name="Zaugg C."/>
            <person name="Fratti M."/>
            <person name="Kunert J."/>
            <person name="Boulat O."/>
            <person name="Monod M."/>
        </authorList>
    </citation>
    <scope>NUCLEOTIDE SEQUENCE [MRNA]</scope>
    <scope>FUNCTION</scope>
    <scope>INDUCTION</scope>
</reference>
<reference key="2">
    <citation type="journal article" date="2011" name="Genome Biol.">
        <title>Comparative and functional genomics provide insights into the pathogenicity of dermatophytic fungi.</title>
        <authorList>
            <person name="Burmester A."/>
            <person name="Shelest E."/>
            <person name="Gloeckner G."/>
            <person name="Heddergott C."/>
            <person name="Schindler S."/>
            <person name="Staib P."/>
            <person name="Heidel A."/>
            <person name="Felder M."/>
            <person name="Petzold A."/>
            <person name="Szafranski K."/>
            <person name="Feuermann M."/>
            <person name="Pedruzzi I."/>
            <person name="Priebe S."/>
            <person name="Groth M."/>
            <person name="Winkler R."/>
            <person name="Li W."/>
            <person name="Kniemeyer O."/>
            <person name="Schroeckh V."/>
            <person name="Hertweck C."/>
            <person name="Hube B."/>
            <person name="White T.C."/>
            <person name="Platzer M."/>
            <person name="Guthke R."/>
            <person name="Heitman J."/>
            <person name="Woestemeyer J."/>
            <person name="Zipfel P.F."/>
            <person name="Monod M."/>
            <person name="Brakhage A.A."/>
        </authorList>
    </citation>
    <scope>NUCLEOTIDE SEQUENCE [LARGE SCALE GENOMIC DNA]</scope>
    <source>
        <strain>ATCC MYA-4681 / CBS 112371</strain>
    </source>
</reference>
<reference key="3">
    <citation type="journal article" date="2013" name="J. Invest. Dermatol.">
        <title>Keratin degradation by dermatophytes relies on cysteine dioxygenase and a sulfite efflux pump.</title>
        <authorList>
            <person name="Grumbt M."/>
            <person name="Monod M."/>
            <person name="Yamada T."/>
            <person name="Hertweck C."/>
            <person name="Kunert J."/>
            <person name="Staib P."/>
        </authorList>
    </citation>
    <scope>FUNCTION</scope>
    <scope>DISRUPTION PHENOTYPE</scope>
</reference>
<name>SSU1_ARTBC</name>
<accession>A3R044</accession>
<accession>D4B4Y9</accession>
<accession>D4B4Z0</accession>
<evidence type="ECO:0000255" key="1"/>
<evidence type="ECO:0000269" key="2">
    <source>
    </source>
</evidence>
<evidence type="ECO:0000269" key="3">
    <source>
    </source>
</evidence>
<evidence type="ECO:0000303" key="4">
    <source>
    </source>
</evidence>
<evidence type="ECO:0000303" key="5">
    <source>
    </source>
</evidence>
<evidence type="ECO:0000305" key="6"/>
<dbReference type="EMBL" id="EF035480">
    <property type="protein sequence ID" value="ABM87938.1"/>
    <property type="molecule type" value="mRNA"/>
</dbReference>
<dbReference type="EMBL" id="ABSU01000035">
    <property type="protein sequence ID" value="EFE29634.1"/>
    <property type="status" value="ALT_SEQ"/>
    <property type="molecule type" value="Genomic_DNA"/>
</dbReference>
<dbReference type="EMBL" id="ABSU01000035">
    <property type="protein sequence ID" value="EFE29635.1"/>
    <property type="status" value="ALT_SEQ"/>
    <property type="molecule type" value="Genomic_DNA"/>
</dbReference>
<dbReference type="RefSeq" id="XP_003010274.1">
    <property type="nucleotide sequence ID" value="XM_003010228.1"/>
</dbReference>
<dbReference type="RefSeq" id="XP_003010275.1">
    <property type="nucleotide sequence ID" value="XM_003010229.1"/>
</dbReference>
<dbReference type="SMR" id="A3R044"/>
<dbReference type="STRING" id="663331.A3R044"/>
<dbReference type="TCDB" id="2.A.16.4.2">
    <property type="family name" value="the telurite-resistance/dicarboxylate transporter (tdt) family"/>
</dbReference>
<dbReference type="GlyCosmos" id="A3R044">
    <property type="glycosylation" value="1 site, No reported glycans"/>
</dbReference>
<dbReference type="GeneID" id="9525542"/>
<dbReference type="GeneID" id="9525543"/>
<dbReference type="KEGG" id="abe:ARB_03529"/>
<dbReference type="KEGG" id="abe:ARB_03530"/>
<dbReference type="eggNOG" id="ENOG502QT02">
    <property type="taxonomic scope" value="Eukaryota"/>
</dbReference>
<dbReference type="HOGENOM" id="CLU_030057_5_1_1"/>
<dbReference type="Proteomes" id="UP000008866">
    <property type="component" value="Unassembled WGS sequence"/>
</dbReference>
<dbReference type="GO" id="GO:0005886">
    <property type="term" value="C:plasma membrane"/>
    <property type="evidence" value="ECO:0007669"/>
    <property type="project" value="UniProtKB-SubCell"/>
</dbReference>
<dbReference type="GO" id="GO:0000319">
    <property type="term" value="F:sulfite transmembrane transporter activity"/>
    <property type="evidence" value="ECO:0007669"/>
    <property type="project" value="TreeGrafter"/>
</dbReference>
<dbReference type="CDD" id="cd09318">
    <property type="entry name" value="TDT_SSU1"/>
    <property type="match status" value="1"/>
</dbReference>
<dbReference type="FunFam" id="1.50.10.150:FF:000004">
    <property type="entry name" value="Malic acid transporter"/>
    <property type="match status" value="1"/>
</dbReference>
<dbReference type="Gene3D" id="1.50.10.150">
    <property type="entry name" value="Voltage-dependent anion channel"/>
    <property type="match status" value="1"/>
</dbReference>
<dbReference type="InterPro" id="IPR004695">
    <property type="entry name" value="SLAC1/Mae1/Ssu1/TehA"/>
</dbReference>
<dbReference type="InterPro" id="IPR051629">
    <property type="entry name" value="Sulfite_efflux_TDT"/>
</dbReference>
<dbReference type="InterPro" id="IPR038665">
    <property type="entry name" value="Voltage-dep_anion_channel_sf"/>
</dbReference>
<dbReference type="PANTHER" id="PTHR31686">
    <property type="match status" value="1"/>
</dbReference>
<dbReference type="PANTHER" id="PTHR31686:SF1">
    <property type="entry name" value="SULFITE EFFLUX PUMP SSU1"/>
    <property type="match status" value="1"/>
</dbReference>
<dbReference type="Pfam" id="PF03595">
    <property type="entry name" value="SLAC1"/>
    <property type="match status" value="1"/>
</dbReference>
<gene>
    <name evidence="4" type="primary">SSU1</name>
    <name evidence="5" type="ORF">ARB_03529</name>
    <name evidence="5" type="ORF">ARB_03530</name>
</gene>
<feature type="chain" id="PRO_0000384413" description="Sulfite efflux pump SSU1">
    <location>
        <begin position="1"/>
        <end position="375"/>
    </location>
</feature>
<feature type="topological domain" description="Cytoplasmic" evidence="1">
    <location>
        <begin position="1"/>
        <end position="25"/>
    </location>
</feature>
<feature type="transmembrane region" description="Helical" evidence="1">
    <location>
        <begin position="26"/>
        <end position="46"/>
    </location>
</feature>
<feature type="topological domain" description="Extracellular" evidence="1">
    <location>
        <begin position="47"/>
        <end position="59"/>
    </location>
</feature>
<feature type="transmembrane region" description="Helical" evidence="1">
    <location>
        <begin position="60"/>
        <end position="80"/>
    </location>
</feature>
<feature type="topological domain" description="Cytoplasmic" evidence="1">
    <location>
        <begin position="81"/>
        <end position="101"/>
    </location>
</feature>
<feature type="transmembrane region" description="Helical" evidence="1">
    <location>
        <begin position="102"/>
        <end position="122"/>
    </location>
</feature>
<feature type="topological domain" description="Extracellular" evidence="1">
    <location>
        <begin position="123"/>
        <end position="135"/>
    </location>
</feature>
<feature type="transmembrane region" description="Helical" evidence="1">
    <location>
        <begin position="136"/>
        <end position="156"/>
    </location>
</feature>
<feature type="topological domain" description="Cytoplasmic" evidence="1">
    <location>
        <begin position="157"/>
        <end position="167"/>
    </location>
</feature>
<feature type="transmembrane region" description="Helical" evidence="1">
    <location>
        <begin position="168"/>
        <end position="188"/>
    </location>
</feature>
<feature type="topological domain" description="Extracellular" evidence="1">
    <location>
        <begin position="189"/>
        <end position="200"/>
    </location>
</feature>
<feature type="transmembrane region" description="Helical" evidence="1">
    <location>
        <begin position="201"/>
        <end position="221"/>
    </location>
</feature>
<feature type="topological domain" description="Cytoplasmic" evidence="1">
    <location>
        <begin position="222"/>
        <end position="234"/>
    </location>
</feature>
<feature type="transmembrane region" description="Helical" evidence="1">
    <location>
        <begin position="235"/>
        <end position="255"/>
    </location>
</feature>
<feature type="topological domain" description="Extracellular" evidence="1">
    <location>
        <begin position="256"/>
        <end position="277"/>
    </location>
</feature>
<feature type="transmembrane region" description="Helical" evidence="1">
    <location>
        <begin position="278"/>
        <end position="298"/>
    </location>
</feature>
<feature type="topological domain" description="Cytoplasmic" evidence="1">
    <location>
        <begin position="299"/>
        <end position="309"/>
    </location>
</feature>
<feature type="transmembrane region" description="Helical" evidence="1">
    <location>
        <begin position="310"/>
        <end position="330"/>
    </location>
</feature>
<feature type="topological domain" description="Extracellular" evidence="1">
    <location>
        <begin position="331"/>
        <end position="343"/>
    </location>
</feature>
<feature type="transmembrane region" description="Helical" evidence="1">
    <location>
        <begin position="344"/>
        <end position="364"/>
    </location>
</feature>
<feature type="topological domain" description="Cytoplasmic" evidence="1">
    <location>
        <begin position="365"/>
        <end position="375"/>
    </location>
</feature>
<feature type="glycosylation site" description="N-linked (GlcNAc...) asparagine" evidence="1">
    <location>
        <position position="193"/>
    </location>
</feature>
<feature type="sequence conflict" description="In Ref. 2; EFE29635/EFE29634." evidence="6" ref="2">
    <original>H</original>
    <variation>Q</variation>
    <location>
        <position position="8"/>
    </location>
</feature>
<proteinExistence type="evidence at transcript level"/>
<protein>
    <recommendedName>
        <fullName evidence="4">Sulfite efflux pump SSU1</fullName>
    </recommendedName>
</protein>
<comment type="function">
    <text evidence="2 3">Sulphite efflux pump required for the secretion of sulphite as a reducing agent. In the presence of sulphite, cystine in keratin is directly cleaved to cysteine and S-sulphocysteine, and thereby, reduced proteins become accessible to hydrolysis by a variety of secreted endo- and exoproteases. Excretion of sulphite mediated by an efflux pump also represents a detoxification pathway for dermatophytes during infection of the epidermal stratum corneum, hair and nails, which are rich in cysteine.</text>
</comment>
<comment type="subcellular location">
    <subcellularLocation>
        <location evidence="6">Cell membrane</location>
        <topology evidence="6">Multi-pass membrane protein</topology>
    </subcellularLocation>
</comment>
<comment type="induction">
    <text evidence="2">Expression is strongly increased during growth on protein rich medium containing keratin or cystine-arginine.</text>
</comment>
<comment type="disruption phenotype">
    <text evidence="3">Leads to hypersensitivity to L-cysteine and sulfite. Abolishes the ability to grow on human hair and strongly impairs growth on human nails.</text>
</comment>
<comment type="similarity">
    <text evidence="6">Belongs to the tellurite-resistance/dicarboxylate transporter (TDT) family.</text>
</comment>
<comment type="sequence caution" evidence="6">
    <conflict type="erroneous gene model prediction">
        <sequence resource="EMBL-CDS" id="EFE29634"/>
    </conflict>
</comment>
<comment type="sequence caution" evidence="6">
    <conflict type="erroneous gene model prediction">
        <sequence resource="EMBL-CDS" id="EFE29635"/>
    </conflict>
</comment>
<organism>
    <name type="scientific">Arthroderma benhamiae (strain ATCC MYA-4681 / CBS 112371)</name>
    <name type="common">Trichophyton mentagrophytes</name>
    <dbReference type="NCBI Taxonomy" id="663331"/>
    <lineage>
        <taxon>Eukaryota</taxon>
        <taxon>Fungi</taxon>
        <taxon>Dikarya</taxon>
        <taxon>Ascomycota</taxon>
        <taxon>Pezizomycotina</taxon>
        <taxon>Eurotiomycetes</taxon>
        <taxon>Eurotiomycetidae</taxon>
        <taxon>Onygenales</taxon>
        <taxon>Arthrodermataceae</taxon>
        <taxon>Trichophyton</taxon>
    </lineage>
</organism>
<keyword id="KW-1003">Cell membrane</keyword>
<keyword id="KW-0325">Glycoprotein</keyword>
<keyword id="KW-0472">Membrane</keyword>
<keyword id="KW-1185">Reference proteome</keyword>
<keyword id="KW-0812">Transmembrane</keyword>
<keyword id="KW-1133">Transmembrane helix</keyword>
<keyword id="KW-0813">Transport</keyword>
<sequence>MPSGSGFHNIEEAGEKARKRDDWIAISNFHPGWFSVNMGTGITAILLQNLPYQFPGLHYIAVILFILNVIIFFLFLTISITRYCLWPDKFKAMLAHPAHSMLLGTFPMGFATIINCIVFICVPVWGEWASRFAWGLWWIDAAVSVAICYFVPFMLMTKHTSSLETMTAAWLLPIVAPVVAAASGGVVADSLQNDTHALITILVCYVMWGSAVPLAMVILVIYFQRLAIHKLVPRAAIVSALLPIGPLGQGGFGLMQLGVVAKRVFPRLDFLAPIAGDIFYVMGAFIAMIMWGFGLIWLWFALASFTRGKFYFNIGWWAFTFPLGVFTTATTQMGKEFNSPFFDILGTFFSIVVTCMWVLVFALTVYKSCTKELFR</sequence>